<keyword id="KW-0614">Plasmid</keyword>
<geneLocation type="plasmid">
    <name>F</name>
</geneLocation>
<evidence type="ECO:0000305" key="1"/>
<proteinExistence type="predicted"/>
<comment type="sequence caution" evidence="1">
    <conflict type="erroneous initiation">
        <sequence resource="EMBL-CDS" id="AAC44212"/>
    </conflict>
</comment>
<gene>
    <name type="primary">trbJ</name>
    <name type="ordered locus">ECOK12F096</name>
</gene>
<dbReference type="EMBL" id="M20787">
    <property type="protein sequence ID" value="AAC63068.1"/>
    <property type="molecule type" value="Genomic_DNA"/>
</dbReference>
<dbReference type="EMBL" id="U01159">
    <property type="protein sequence ID" value="AAC44212.1"/>
    <property type="status" value="ALT_INIT"/>
    <property type="molecule type" value="Genomic_DNA"/>
</dbReference>
<dbReference type="EMBL" id="AP001918">
    <property type="protein sequence ID" value="BAA97966.1"/>
    <property type="molecule type" value="Genomic_DNA"/>
</dbReference>
<dbReference type="PIR" id="F32238">
    <property type="entry name" value="QQEC25"/>
</dbReference>
<dbReference type="RefSeq" id="NP_061475.1">
    <property type="nucleotide sequence ID" value="NC_002483.1"/>
</dbReference>
<dbReference type="RefSeq" id="NP_862941.1">
    <property type="nucleotide sequence ID" value="NC_004998.1"/>
</dbReference>
<dbReference type="RefSeq" id="WP_001443031.1">
    <property type="nucleotide sequence ID" value="NZ_JACEFS010000047.1"/>
</dbReference>
<dbReference type="OrthoDB" id="9923357at2"/>
<dbReference type="PRO" id="PR:P18353"/>
<dbReference type="NCBIfam" id="NF010265">
    <property type="entry name" value="PRK13711.1"/>
    <property type="match status" value="1"/>
</dbReference>
<sequence length="113" mass="12587">MPPVLWRGWIPFCRCTEEKKVRNKQVVLLIAGISGIVTGIIVSLNIPFIRQGLFYPASPVEIVVSLSLTFSVSVVFFVGAIVGWISVSEIYYSRMTGLNESSEISEGTYNERK</sequence>
<accession>P18353</accession>
<accession>Q51810</accession>
<reference key="1">
    <citation type="journal article" date="1989" name="J. Bacteriol.">
        <title>Nucleotide sequence of traQ and adjacent loci in the Escherichia coli K-12 F-plasmid transfer operon.</title>
        <authorList>
            <person name="Wu J.H."/>
            <person name="Ippen-Ihler K."/>
        </authorList>
    </citation>
    <scope>NUCLEOTIDE SEQUENCE [GENOMIC DNA]</scope>
    <source>
        <strain>K12</strain>
    </source>
</reference>
<reference key="2">
    <citation type="journal article" date="1994" name="Microbiol. Rev.">
        <title>Analysis of the sequence and gene products of the transfer region of the F sex factor.</title>
        <authorList>
            <person name="Frost L.S."/>
            <person name="Ippen-Ihler K."/>
            <person name="Skurray R.A."/>
        </authorList>
    </citation>
    <scope>NUCLEOTIDE SEQUENCE [GENOMIC DNA]</scope>
</reference>
<reference key="3">
    <citation type="submission" date="2000-04" db="EMBL/GenBank/DDBJ databases">
        <title>Complete nucleotide sequence of the F plasmid: its implications for organization and diversification of plasmid genomes.</title>
        <authorList>
            <person name="Shimizu H."/>
            <person name="Saitoh Y."/>
            <person name="Suda Y."/>
            <person name="Uehara K."/>
            <person name="Sampei G."/>
            <person name="Mizobuchi K."/>
        </authorList>
    </citation>
    <scope>NUCLEOTIDE SEQUENCE [LARGE SCALE GENOMIC DNA]</scope>
    <source>
        <strain>K12 / CR63</strain>
    </source>
</reference>
<feature type="chain" id="PRO_0000068494" description="Protein TrbJ">
    <location>
        <begin position="1"/>
        <end position="113"/>
    </location>
</feature>
<protein>
    <recommendedName>
        <fullName>Protein TrbJ</fullName>
    </recommendedName>
</protein>
<organism>
    <name type="scientific">Escherichia coli (strain K12)</name>
    <dbReference type="NCBI Taxonomy" id="83333"/>
    <lineage>
        <taxon>Bacteria</taxon>
        <taxon>Pseudomonadati</taxon>
        <taxon>Pseudomonadota</taxon>
        <taxon>Gammaproteobacteria</taxon>
        <taxon>Enterobacterales</taxon>
        <taxon>Enterobacteriaceae</taxon>
        <taxon>Escherichia</taxon>
    </lineage>
</organism>
<name>TRBJ_ECOLI</name>